<feature type="chain" id="PRO_1000194979" description="Ribosomal RNA large subunit methyltransferase E">
    <location>
        <begin position="1"/>
        <end position="220"/>
    </location>
</feature>
<feature type="region of interest" description="Disordered" evidence="2">
    <location>
        <begin position="198"/>
        <end position="220"/>
    </location>
</feature>
<feature type="active site" description="Proton acceptor" evidence="1">
    <location>
        <position position="173"/>
    </location>
</feature>
<feature type="binding site" evidence="1">
    <location>
        <position position="60"/>
    </location>
    <ligand>
        <name>S-adenosyl-L-methionine</name>
        <dbReference type="ChEBI" id="CHEBI:59789"/>
    </ligand>
</feature>
<feature type="binding site" evidence="1">
    <location>
        <position position="62"/>
    </location>
    <ligand>
        <name>S-adenosyl-L-methionine</name>
        <dbReference type="ChEBI" id="CHEBI:59789"/>
    </ligand>
</feature>
<feature type="binding site" evidence="1">
    <location>
        <position position="92"/>
    </location>
    <ligand>
        <name>S-adenosyl-L-methionine</name>
        <dbReference type="ChEBI" id="CHEBI:59789"/>
    </ligand>
</feature>
<feature type="binding site" evidence="1">
    <location>
        <position position="108"/>
    </location>
    <ligand>
        <name>S-adenosyl-L-methionine</name>
        <dbReference type="ChEBI" id="CHEBI:59789"/>
    </ligand>
</feature>
<feature type="binding site" evidence="1">
    <location>
        <position position="133"/>
    </location>
    <ligand>
        <name>S-adenosyl-L-methionine</name>
        <dbReference type="ChEBI" id="CHEBI:59789"/>
    </ligand>
</feature>
<organism>
    <name type="scientific">Burkholderia orbicola (strain MC0-3)</name>
    <dbReference type="NCBI Taxonomy" id="406425"/>
    <lineage>
        <taxon>Bacteria</taxon>
        <taxon>Pseudomonadati</taxon>
        <taxon>Pseudomonadota</taxon>
        <taxon>Betaproteobacteria</taxon>
        <taxon>Burkholderiales</taxon>
        <taxon>Burkholderiaceae</taxon>
        <taxon>Burkholderia</taxon>
        <taxon>Burkholderia cepacia complex</taxon>
        <taxon>Burkholderia orbicola</taxon>
    </lineage>
</organism>
<proteinExistence type="inferred from homology"/>
<gene>
    <name evidence="1" type="primary">rlmE</name>
    <name evidence="1" type="synonym">ftsJ</name>
    <name evidence="1" type="synonym">rrmJ</name>
    <name type="ordered locus">Bcenmc03_1267</name>
</gene>
<accession>B1JZE9</accession>
<sequence>MAKNRFNQHWLHDHINDPYVKMAQREGYRARAAYKLKEIDEQDKLIRPGQVIVDLGATPGSWSQYARNKLAQGKKRDAEREGGIDGTIVALDILPMEPIADVHFLQGDFREDDVLHQLEEVLEGRAVDLVISDMAPNLSGVASADAARIEHLCDLALEFAQNHLKPDGALLVKCFHGSGYSQIVEKFKQQFKVVAPRKPKASRDKSSETFILGRQLKHPR</sequence>
<protein>
    <recommendedName>
        <fullName evidence="1">Ribosomal RNA large subunit methyltransferase E</fullName>
        <ecNumber evidence="1">2.1.1.166</ecNumber>
    </recommendedName>
    <alternativeName>
        <fullName evidence="1">23S rRNA Um2552 methyltransferase</fullName>
    </alternativeName>
    <alternativeName>
        <fullName evidence="1">rRNA (uridine-2'-O-)-methyltransferase</fullName>
    </alternativeName>
</protein>
<dbReference type="EC" id="2.1.1.166" evidence="1"/>
<dbReference type="EMBL" id="CP000958">
    <property type="protein sequence ID" value="ACA90442.1"/>
    <property type="molecule type" value="Genomic_DNA"/>
</dbReference>
<dbReference type="RefSeq" id="WP_006476343.1">
    <property type="nucleotide sequence ID" value="NC_010508.1"/>
</dbReference>
<dbReference type="SMR" id="B1JZE9"/>
<dbReference type="GeneID" id="83048060"/>
<dbReference type="KEGG" id="bcm:Bcenmc03_1267"/>
<dbReference type="HOGENOM" id="CLU_009422_4_1_4"/>
<dbReference type="Proteomes" id="UP000002169">
    <property type="component" value="Chromosome 1"/>
</dbReference>
<dbReference type="GO" id="GO:0005737">
    <property type="term" value="C:cytoplasm"/>
    <property type="evidence" value="ECO:0007669"/>
    <property type="project" value="UniProtKB-SubCell"/>
</dbReference>
<dbReference type="GO" id="GO:0008650">
    <property type="term" value="F:rRNA (uridine-2'-O-)-methyltransferase activity"/>
    <property type="evidence" value="ECO:0007669"/>
    <property type="project" value="UniProtKB-UniRule"/>
</dbReference>
<dbReference type="FunFam" id="3.40.50.150:FF:000005">
    <property type="entry name" value="Ribosomal RNA large subunit methyltransferase E"/>
    <property type="match status" value="1"/>
</dbReference>
<dbReference type="Gene3D" id="3.40.50.150">
    <property type="entry name" value="Vaccinia Virus protein VP39"/>
    <property type="match status" value="1"/>
</dbReference>
<dbReference type="HAMAP" id="MF_01547">
    <property type="entry name" value="RNA_methyltr_E"/>
    <property type="match status" value="1"/>
</dbReference>
<dbReference type="InterPro" id="IPR050082">
    <property type="entry name" value="RNA_methyltr_RlmE"/>
</dbReference>
<dbReference type="InterPro" id="IPR002877">
    <property type="entry name" value="RNA_MeTrfase_FtsJ_dom"/>
</dbReference>
<dbReference type="InterPro" id="IPR015507">
    <property type="entry name" value="rRNA-MeTfrase_E"/>
</dbReference>
<dbReference type="InterPro" id="IPR029063">
    <property type="entry name" value="SAM-dependent_MTases_sf"/>
</dbReference>
<dbReference type="PANTHER" id="PTHR10920">
    <property type="entry name" value="RIBOSOMAL RNA METHYLTRANSFERASE"/>
    <property type="match status" value="1"/>
</dbReference>
<dbReference type="PANTHER" id="PTHR10920:SF18">
    <property type="entry name" value="RRNA METHYLTRANSFERASE 2, MITOCHONDRIAL"/>
    <property type="match status" value="1"/>
</dbReference>
<dbReference type="Pfam" id="PF01728">
    <property type="entry name" value="FtsJ"/>
    <property type="match status" value="1"/>
</dbReference>
<dbReference type="PIRSF" id="PIRSF005461">
    <property type="entry name" value="23S_rRNA_mtase"/>
    <property type="match status" value="1"/>
</dbReference>
<dbReference type="SUPFAM" id="SSF53335">
    <property type="entry name" value="S-adenosyl-L-methionine-dependent methyltransferases"/>
    <property type="match status" value="1"/>
</dbReference>
<comment type="function">
    <text evidence="1">Specifically methylates the uridine in position 2552 of 23S rRNA at the 2'-O position of the ribose in the fully assembled 50S ribosomal subunit.</text>
</comment>
<comment type="catalytic activity">
    <reaction evidence="1">
        <text>uridine(2552) in 23S rRNA + S-adenosyl-L-methionine = 2'-O-methyluridine(2552) in 23S rRNA + S-adenosyl-L-homocysteine + H(+)</text>
        <dbReference type="Rhea" id="RHEA:42720"/>
        <dbReference type="Rhea" id="RHEA-COMP:10202"/>
        <dbReference type="Rhea" id="RHEA-COMP:10203"/>
        <dbReference type="ChEBI" id="CHEBI:15378"/>
        <dbReference type="ChEBI" id="CHEBI:57856"/>
        <dbReference type="ChEBI" id="CHEBI:59789"/>
        <dbReference type="ChEBI" id="CHEBI:65315"/>
        <dbReference type="ChEBI" id="CHEBI:74478"/>
        <dbReference type="EC" id="2.1.1.166"/>
    </reaction>
</comment>
<comment type="subcellular location">
    <subcellularLocation>
        <location evidence="1">Cytoplasm</location>
    </subcellularLocation>
</comment>
<comment type="similarity">
    <text evidence="1">Belongs to the class I-like SAM-binding methyltransferase superfamily. RNA methyltransferase RlmE family.</text>
</comment>
<name>RLME_BURO0</name>
<evidence type="ECO:0000255" key="1">
    <source>
        <dbReference type="HAMAP-Rule" id="MF_01547"/>
    </source>
</evidence>
<evidence type="ECO:0000256" key="2">
    <source>
        <dbReference type="SAM" id="MobiDB-lite"/>
    </source>
</evidence>
<keyword id="KW-0963">Cytoplasm</keyword>
<keyword id="KW-0489">Methyltransferase</keyword>
<keyword id="KW-0698">rRNA processing</keyword>
<keyword id="KW-0949">S-adenosyl-L-methionine</keyword>
<keyword id="KW-0808">Transferase</keyword>
<reference key="1">
    <citation type="submission" date="2008-02" db="EMBL/GenBank/DDBJ databases">
        <title>Complete sequence of chromosome 1 of Burkholderia cenocepacia MC0-3.</title>
        <authorList>
            <person name="Copeland A."/>
            <person name="Lucas S."/>
            <person name="Lapidus A."/>
            <person name="Barry K."/>
            <person name="Bruce D."/>
            <person name="Goodwin L."/>
            <person name="Glavina del Rio T."/>
            <person name="Dalin E."/>
            <person name="Tice H."/>
            <person name="Pitluck S."/>
            <person name="Chain P."/>
            <person name="Malfatti S."/>
            <person name="Shin M."/>
            <person name="Vergez L."/>
            <person name="Schmutz J."/>
            <person name="Larimer F."/>
            <person name="Land M."/>
            <person name="Hauser L."/>
            <person name="Kyrpides N."/>
            <person name="Mikhailova N."/>
            <person name="Tiedje J."/>
            <person name="Richardson P."/>
        </authorList>
    </citation>
    <scope>NUCLEOTIDE SEQUENCE [LARGE SCALE GENOMIC DNA]</scope>
    <source>
        <strain>MC0-3</strain>
    </source>
</reference>